<dbReference type="EC" id="3.4.22.-" evidence="3 9 11 16 17 19 20"/>
<dbReference type="EMBL" id="AK002062">
    <property type="protein sequence ID" value="BAA92064.1"/>
    <property type="molecule type" value="mRNA"/>
</dbReference>
<dbReference type="EMBL" id="CR457278">
    <property type="protein sequence ID" value="CAG33559.1"/>
    <property type="molecule type" value="mRNA"/>
</dbReference>
<dbReference type="EMBL" id="AC106897">
    <property type="status" value="NOT_ANNOTATED_CDS"/>
    <property type="molecule type" value="Genomic_DNA"/>
</dbReference>
<dbReference type="EMBL" id="BC010493">
    <property type="protein sequence ID" value="AAH10493.1"/>
    <property type="molecule type" value="mRNA"/>
</dbReference>
<dbReference type="CCDS" id="CCDS3842.1"/>
<dbReference type="RefSeq" id="NP_060829.2">
    <property type="nucleotide sequence ID" value="NM_018359.5"/>
</dbReference>
<dbReference type="SMR" id="Q9NUQ7"/>
<dbReference type="BioGRID" id="120606">
    <property type="interactions" value="144"/>
</dbReference>
<dbReference type="FunCoup" id="Q9NUQ7">
    <property type="interactions" value="2573"/>
</dbReference>
<dbReference type="IntAct" id="Q9NUQ7">
    <property type="interactions" value="89"/>
</dbReference>
<dbReference type="MINT" id="Q9NUQ7"/>
<dbReference type="STRING" id="9606.ENSP00000264689"/>
<dbReference type="MEROPS" id="C78.002"/>
<dbReference type="GlyGen" id="Q9NUQ7">
    <property type="glycosylation" value="1 site, 1 O-linked glycan (1 site)"/>
</dbReference>
<dbReference type="iPTMnet" id="Q9NUQ7"/>
<dbReference type="PhosphoSitePlus" id="Q9NUQ7"/>
<dbReference type="SwissPalm" id="Q9NUQ7"/>
<dbReference type="BioMuta" id="UFSP2"/>
<dbReference type="DMDM" id="251757433"/>
<dbReference type="jPOST" id="Q9NUQ7"/>
<dbReference type="MassIVE" id="Q9NUQ7"/>
<dbReference type="PaxDb" id="9606-ENSP00000264689"/>
<dbReference type="PeptideAtlas" id="Q9NUQ7"/>
<dbReference type="ProteomicsDB" id="82711"/>
<dbReference type="Pumba" id="Q9NUQ7"/>
<dbReference type="Antibodypedia" id="45789">
    <property type="antibodies" value="99 antibodies from 19 providers"/>
</dbReference>
<dbReference type="DNASU" id="55325"/>
<dbReference type="Ensembl" id="ENST00000264689.11">
    <property type="protein sequence ID" value="ENSP00000264689.6"/>
    <property type="gene ID" value="ENSG00000109775.11"/>
</dbReference>
<dbReference type="GeneID" id="55325"/>
<dbReference type="KEGG" id="hsa:55325"/>
<dbReference type="MANE-Select" id="ENST00000264689.11">
    <property type="protein sequence ID" value="ENSP00000264689.6"/>
    <property type="RefSeq nucleotide sequence ID" value="NM_018359.5"/>
    <property type="RefSeq protein sequence ID" value="NP_060829.2"/>
</dbReference>
<dbReference type="UCSC" id="uc003ixo.3">
    <property type="organism name" value="human"/>
</dbReference>
<dbReference type="AGR" id="HGNC:25640"/>
<dbReference type="CTD" id="55325"/>
<dbReference type="DisGeNET" id="55325"/>
<dbReference type="GeneCards" id="UFSP2"/>
<dbReference type="HGNC" id="HGNC:25640">
    <property type="gene designation" value="UFSP2"/>
</dbReference>
<dbReference type="HPA" id="ENSG00000109775">
    <property type="expression patterns" value="Low tissue specificity"/>
</dbReference>
<dbReference type="MalaCards" id="UFSP2"/>
<dbReference type="MIM" id="142669">
    <property type="type" value="phenotype"/>
</dbReference>
<dbReference type="MIM" id="611482">
    <property type="type" value="gene"/>
</dbReference>
<dbReference type="MIM" id="617974">
    <property type="type" value="phenotype"/>
</dbReference>
<dbReference type="MIM" id="620028">
    <property type="type" value="phenotype"/>
</dbReference>
<dbReference type="neXtProt" id="NX_Q9NUQ7"/>
<dbReference type="OpenTargets" id="ENSG00000109775"/>
<dbReference type="Orphanet" id="88616">
    <property type="disease" value="Autosomal recessive non-syndromic intellectual disability"/>
</dbReference>
<dbReference type="Orphanet" id="2114">
    <property type="disease" value="Hip dysplasia, Beukes type"/>
</dbReference>
<dbReference type="PharmGKB" id="PA162408529"/>
<dbReference type="VEuPathDB" id="HostDB:ENSG00000109775"/>
<dbReference type="eggNOG" id="KOG2433">
    <property type="taxonomic scope" value="Eukaryota"/>
</dbReference>
<dbReference type="GeneTree" id="ENSGT00940000157115"/>
<dbReference type="InParanoid" id="Q9NUQ7"/>
<dbReference type="OMA" id="MDILFRV"/>
<dbReference type="OrthoDB" id="417506at2759"/>
<dbReference type="PAN-GO" id="Q9NUQ7">
    <property type="GO annotations" value="1 GO annotation based on evolutionary models"/>
</dbReference>
<dbReference type="PhylomeDB" id="Q9NUQ7"/>
<dbReference type="TreeFam" id="TF325896"/>
<dbReference type="PathwayCommons" id="Q9NUQ7"/>
<dbReference type="SignaLink" id="Q9NUQ7"/>
<dbReference type="BioGRID-ORCS" id="55325">
    <property type="hits" value="158 hits in 1175 CRISPR screens"/>
</dbReference>
<dbReference type="ChiTaRS" id="UFSP2">
    <property type="organism name" value="human"/>
</dbReference>
<dbReference type="GenomeRNAi" id="55325"/>
<dbReference type="Pharos" id="Q9NUQ7">
    <property type="development level" value="Tbio"/>
</dbReference>
<dbReference type="PRO" id="PR:Q9NUQ7"/>
<dbReference type="Proteomes" id="UP000005640">
    <property type="component" value="Chromosome 4"/>
</dbReference>
<dbReference type="RNAct" id="Q9NUQ7">
    <property type="molecule type" value="protein"/>
</dbReference>
<dbReference type="Bgee" id="ENSG00000109775">
    <property type="expression patterns" value="Expressed in calcaneal tendon and 204 other cell types or tissues"/>
</dbReference>
<dbReference type="ExpressionAtlas" id="Q9NUQ7">
    <property type="expression patterns" value="baseline and differential"/>
</dbReference>
<dbReference type="GO" id="GO:0005737">
    <property type="term" value="C:cytoplasm"/>
    <property type="evidence" value="ECO:0000250"/>
    <property type="project" value="UniProtKB"/>
</dbReference>
<dbReference type="GO" id="GO:0005783">
    <property type="term" value="C:endoplasmic reticulum"/>
    <property type="evidence" value="ECO:0000314"/>
    <property type="project" value="UniProtKB"/>
</dbReference>
<dbReference type="GO" id="GO:0005634">
    <property type="term" value="C:nucleus"/>
    <property type="evidence" value="ECO:0000250"/>
    <property type="project" value="UniProtKB"/>
</dbReference>
<dbReference type="GO" id="GO:0071567">
    <property type="term" value="F:deUFMylase activity"/>
    <property type="evidence" value="ECO:0000314"/>
    <property type="project" value="UniProtKB"/>
</dbReference>
<dbReference type="GO" id="GO:1903051">
    <property type="term" value="P:negative regulation of proteolysis involved in protein catabolic process"/>
    <property type="evidence" value="ECO:0000314"/>
    <property type="project" value="UniProt"/>
</dbReference>
<dbReference type="GO" id="GO:0006508">
    <property type="term" value="P:proteolysis"/>
    <property type="evidence" value="ECO:0000315"/>
    <property type="project" value="UniProtKB"/>
</dbReference>
<dbReference type="GO" id="GO:0033146">
    <property type="term" value="P:regulation of intracellular estrogen receptor signaling pathway"/>
    <property type="evidence" value="ECO:0000315"/>
    <property type="project" value="UniProtKB"/>
</dbReference>
<dbReference type="GO" id="GO:0032649">
    <property type="term" value="P:regulation of type II interferon production"/>
    <property type="evidence" value="ECO:0007669"/>
    <property type="project" value="Ensembl"/>
</dbReference>
<dbReference type="GO" id="GO:0072344">
    <property type="term" value="P:rescue of stalled ribosome"/>
    <property type="evidence" value="ECO:0000314"/>
    <property type="project" value="UniProt"/>
</dbReference>
<dbReference type="GO" id="GO:0032790">
    <property type="term" value="P:ribosome disassembly"/>
    <property type="evidence" value="ECO:0000314"/>
    <property type="project" value="UniProtKB"/>
</dbReference>
<dbReference type="FunFam" id="3.90.70.130:FF:000001">
    <property type="entry name" value="Probable Ufm1-specific protease 2"/>
    <property type="match status" value="1"/>
</dbReference>
<dbReference type="Gene3D" id="3.90.70.130">
    <property type="match status" value="1"/>
</dbReference>
<dbReference type="InterPro" id="IPR012462">
    <property type="entry name" value="UfSP1/2_DUB_cat"/>
</dbReference>
<dbReference type="InterPro" id="IPR049387">
    <property type="entry name" value="UfSP2-like_N"/>
</dbReference>
<dbReference type="PANTHER" id="PTHR48153">
    <property type="entry name" value="UFM1-SPECIFIC PROTEASE 2"/>
    <property type="match status" value="1"/>
</dbReference>
<dbReference type="PANTHER" id="PTHR48153:SF2">
    <property type="entry name" value="UFM1-SPECIFIC PROTEASE 2"/>
    <property type="match status" value="1"/>
</dbReference>
<dbReference type="Pfam" id="PF07910">
    <property type="entry name" value="Peptidase_C78"/>
    <property type="match status" value="1"/>
</dbReference>
<dbReference type="Pfam" id="PF20908">
    <property type="entry name" value="UfSP2_N"/>
    <property type="match status" value="1"/>
</dbReference>
<accession>Q9NUQ7</accession>
<accession>Q6IA77</accession>
<accession>Q96FS3</accession>
<keyword id="KW-0007">Acetylation</keyword>
<keyword id="KW-0963">Cytoplasm</keyword>
<keyword id="KW-0225">Disease variant</keyword>
<keyword id="KW-0242">Dwarfism</keyword>
<keyword id="KW-0256">Endoplasmic reticulum</keyword>
<keyword id="KW-0887">Epilepsy</keyword>
<keyword id="KW-0378">Hydrolase</keyword>
<keyword id="KW-0991">Intellectual disability</keyword>
<keyword id="KW-0539">Nucleus</keyword>
<keyword id="KW-0645">Protease</keyword>
<keyword id="KW-1267">Proteomics identification</keyword>
<keyword id="KW-1185">Reference proteome</keyword>
<keyword id="KW-0788">Thiol protease</keyword>
<keyword id="KW-0833">Ubl conjugation pathway</keyword>
<comment type="function">
    <text evidence="3 6 7 9 10 11 13 14 15 16 17 19 20">Thiol-dependent isopeptidase that specifically cleaves UFM1, a ubiquitin-like modifier protein, from conjugated proteins, such as CD274/PD-L1, CYB5R3, DDRGK1, MRE11, RPL26/uL24, TRIP4 and RPL26/uL24 (PubMed:25219498, PubMed:27351204, PubMed:27926783, PubMed:30783677, PubMed:31595041, PubMed:32160526, PubMed:33473208, PubMed:35394863, PubMed:35926457, PubMed:36543799, PubMed:36893266, PubMed:37795761, PubMed:38383785). While it is also able to mediate the processing of UFM1 precursors, a prerequisite for conjugation reactions, UFSP2 mainly acts as a protein deUFMylase that mediates deconjugation of UFM1 from target proteins (PubMed:27926783). Mediates deUFMylation of RPL26/uL24, a critical step to release the UFM1 ribosome E3 ligase (UREL) complex during the recycling of 60S ribosome subunits from the endoplasmic reticulum (PubMed:38383785). Catalyzes deUFMylation of TRIP4, regulating intracellular nuclear receptors transactivation and thereby regulate cell proliferation and differentiation (PubMed:25219498).</text>
</comment>
<comment type="interaction">
    <interactant intactId="EBI-11153325">
        <id>Q9NUQ7</id>
    </interactant>
    <interactant intactId="EBI-12819523">
        <id>P41238</id>
        <label>APOBEC1</label>
    </interactant>
    <organismsDiffer>false</organismsDiffer>
    <experiments>3</experiments>
</comment>
<comment type="interaction">
    <interactant intactId="EBI-11153325">
        <id>Q9NUQ7</id>
    </interactant>
    <interactant intactId="EBI-8639312">
        <id>P25800</id>
        <label>LMO1</label>
    </interactant>
    <organismsDiffer>false</organismsDiffer>
    <experiments>3</experiments>
</comment>
<comment type="subcellular location">
    <subcellularLocation>
        <location evidence="15">Endoplasmic reticulum</location>
    </subcellularLocation>
    <subcellularLocation>
        <location evidence="1">Cytoplasm</location>
    </subcellularLocation>
    <subcellularLocation>
        <location evidence="1">Nucleus</location>
    </subcellularLocation>
</comment>
<comment type="tissue specificity">
    <text evidence="13">Expressed in brain.</text>
</comment>
<comment type="disease" evidence="5">
    <disease id="DI-04544">
        <name>Beukes hip dysplasia</name>
        <acronym>HDB</acronym>
        <description>A severe progressive degenerative osteoarthritis of the hip joint with underlying dysplasia confined to that region. Affected individuals are of normal stature and have no associated health problems. Inheritance is autosomal dominant.</description>
        <dbReference type="MIM" id="142669"/>
    </disease>
    <text>The disease is caused by variants affecting the gene represented in this entry.</text>
</comment>
<comment type="disease" evidence="3 8 9 12 18">
    <disease id="DI-05247">
        <name>Spondyloepimetaphyseal dysplasia, Di Rocco type</name>
        <acronym>SEMDDR</acronym>
        <description>A skeletal disorder characterized by short stature, joint pain, genu vara and spondyloepimetaphyseal dysplasia involving the hips, knees, ankles, wrists and hands. Patients also exhibit variable degrees of metaphysis and spine involvement. SEMDDR transmission pattern is consistent with autosomal dominant inheritance.</description>
        <dbReference type="MIM" id="617974"/>
    </disease>
    <text>The disease is caused by variants affecting the gene represented in this entry.</text>
</comment>
<comment type="disease" evidence="13">
    <disease id="DI-06501">
        <name>Developmental and epileptic encephalopathy 106</name>
        <acronym>DEE106</acronym>
        <description>A form of epileptic encephalopathy, a heterogeneous group of early-onset epilepsies characterized by refractory seizures, neurodevelopmental impairment, and poor prognosis. Development is normal prior to seizure onset, after which cognitive and motor delays become apparent. DEE106 is an autosomal recessive form characterized by onset of seizures in the first year of life. Affected individuals have profound global developmental delay, limited ability to move, and severely impaired intellectual development with absent speech. Non-specific brain abnormalities may be observed on MRI.</description>
        <dbReference type="MIM" id="620028"/>
    </disease>
    <text>The disease is caused by variants affecting the gene represented in this entry.</text>
</comment>
<comment type="similarity">
    <text evidence="22">Belongs to the peptidase C78 family.</text>
</comment>
<gene>
    <name evidence="21 25" type="primary">UFSP2</name>
    <name evidence="25" type="synonym">C4orf20</name>
</gene>
<evidence type="ECO:0000250" key="1">
    <source>
        <dbReference type="UniProtKB" id="Q99K23"/>
    </source>
</evidence>
<evidence type="ECO:0000269" key="2">
    <source>
    </source>
</evidence>
<evidence type="ECO:0000269" key="3">
    <source>
    </source>
</evidence>
<evidence type="ECO:0000269" key="4">
    <source>
    </source>
</evidence>
<evidence type="ECO:0000269" key="5">
    <source>
    </source>
</evidence>
<evidence type="ECO:0000269" key="6">
    <source>
    </source>
</evidence>
<evidence type="ECO:0000269" key="7">
    <source>
    </source>
</evidence>
<evidence type="ECO:0000269" key="8">
    <source>
    </source>
</evidence>
<evidence type="ECO:0000269" key="9">
    <source>
    </source>
</evidence>
<evidence type="ECO:0000269" key="10">
    <source>
    </source>
</evidence>
<evidence type="ECO:0000269" key="11">
    <source>
    </source>
</evidence>
<evidence type="ECO:0000269" key="12">
    <source>
    </source>
</evidence>
<evidence type="ECO:0000269" key="13">
    <source>
    </source>
</evidence>
<evidence type="ECO:0000269" key="14">
    <source>
    </source>
</evidence>
<evidence type="ECO:0000269" key="15">
    <source>
    </source>
</evidence>
<evidence type="ECO:0000269" key="16">
    <source>
    </source>
</evidence>
<evidence type="ECO:0000269" key="17">
    <source>
    </source>
</evidence>
<evidence type="ECO:0000269" key="18">
    <source>
    </source>
</evidence>
<evidence type="ECO:0000269" key="19">
    <source>
    </source>
</evidence>
<evidence type="ECO:0000269" key="20">
    <source>
    </source>
</evidence>
<evidence type="ECO:0000303" key="21">
    <source>
    </source>
</evidence>
<evidence type="ECO:0000305" key="22"/>
<evidence type="ECO:0000305" key="23">
    <source>
    </source>
</evidence>
<evidence type="ECO:0000305" key="24">
    <source>
    </source>
</evidence>
<evidence type="ECO:0000312" key="25">
    <source>
        <dbReference type="HGNC" id="HGNC:25640"/>
    </source>
</evidence>
<protein>
    <recommendedName>
        <fullName evidence="21">Ufm1-specific protease 2</fullName>
        <shortName evidence="21">UfSP2</shortName>
        <ecNumber evidence="3 9 11 16 17 19 20">3.4.22.-</ecNumber>
    </recommendedName>
</protein>
<reference key="1">
    <citation type="journal article" date="2004" name="Nat. Genet.">
        <title>Complete sequencing and characterization of 21,243 full-length human cDNAs.</title>
        <authorList>
            <person name="Ota T."/>
            <person name="Suzuki Y."/>
            <person name="Nishikawa T."/>
            <person name="Otsuki T."/>
            <person name="Sugiyama T."/>
            <person name="Irie R."/>
            <person name="Wakamatsu A."/>
            <person name="Hayashi K."/>
            <person name="Sato H."/>
            <person name="Nagai K."/>
            <person name="Kimura K."/>
            <person name="Makita H."/>
            <person name="Sekine M."/>
            <person name="Obayashi M."/>
            <person name="Nishi T."/>
            <person name="Shibahara T."/>
            <person name="Tanaka T."/>
            <person name="Ishii S."/>
            <person name="Yamamoto J."/>
            <person name="Saito K."/>
            <person name="Kawai Y."/>
            <person name="Isono Y."/>
            <person name="Nakamura Y."/>
            <person name="Nagahari K."/>
            <person name="Murakami K."/>
            <person name="Yasuda T."/>
            <person name="Iwayanagi T."/>
            <person name="Wagatsuma M."/>
            <person name="Shiratori A."/>
            <person name="Sudo H."/>
            <person name="Hosoiri T."/>
            <person name="Kaku Y."/>
            <person name="Kodaira H."/>
            <person name="Kondo H."/>
            <person name="Sugawara M."/>
            <person name="Takahashi M."/>
            <person name="Kanda K."/>
            <person name="Yokoi T."/>
            <person name="Furuya T."/>
            <person name="Kikkawa E."/>
            <person name="Omura Y."/>
            <person name="Abe K."/>
            <person name="Kamihara K."/>
            <person name="Katsuta N."/>
            <person name="Sato K."/>
            <person name="Tanikawa M."/>
            <person name="Yamazaki M."/>
            <person name="Ninomiya K."/>
            <person name="Ishibashi T."/>
            <person name="Yamashita H."/>
            <person name="Murakawa K."/>
            <person name="Fujimori K."/>
            <person name="Tanai H."/>
            <person name="Kimata M."/>
            <person name="Watanabe M."/>
            <person name="Hiraoka S."/>
            <person name="Chiba Y."/>
            <person name="Ishida S."/>
            <person name="Ono Y."/>
            <person name="Takiguchi S."/>
            <person name="Watanabe S."/>
            <person name="Yosida M."/>
            <person name="Hotuta T."/>
            <person name="Kusano J."/>
            <person name="Kanehori K."/>
            <person name="Takahashi-Fujii A."/>
            <person name="Hara H."/>
            <person name="Tanase T.-O."/>
            <person name="Nomura Y."/>
            <person name="Togiya S."/>
            <person name="Komai F."/>
            <person name="Hara R."/>
            <person name="Takeuchi K."/>
            <person name="Arita M."/>
            <person name="Imose N."/>
            <person name="Musashino K."/>
            <person name="Yuuki H."/>
            <person name="Oshima A."/>
            <person name="Sasaki N."/>
            <person name="Aotsuka S."/>
            <person name="Yoshikawa Y."/>
            <person name="Matsunawa H."/>
            <person name="Ichihara T."/>
            <person name="Shiohata N."/>
            <person name="Sano S."/>
            <person name="Moriya S."/>
            <person name="Momiyama H."/>
            <person name="Satoh N."/>
            <person name="Takami S."/>
            <person name="Terashima Y."/>
            <person name="Suzuki O."/>
            <person name="Nakagawa S."/>
            <person name="Senoh A."/>
            <person name="Mizoguchi H."/>
            <person name="Goto Y."/>
            <person name="Shimizu F."/>
            <person name="Wakebe H."/>
            <person name="Hishigaki H."/>
            <person name="Watanabe T."/>
            <person name="Sugiyama A."/>
            <person name="Takemoto M."/>
            <person name="Kawakami B."/>
            <person name="Yamazaki M."/>
            <person name="Watanabe K."/>
            <person name="Kumagai A."/>
            <person name="Itakura S."/>
            <person name="Fukuzumi Y."/>
            <person name="Fujimori Y."/>
            <person name="Komiyama M."/>
            <person name="Tashiro H."/>
            <person name="Tanigami A."/>
            <person name="Fujiwara T."/>
            <person name="Ono T."/>
            <person name="Yamada K."/>
            <person name="Fujii Y."/>
            <person name="Ozaki K."/>
            <person name="Hirao M."/>
            <person name="Ohmori Y."/>
            <person name="Kawabata A."/>
            <person name="Hikiji T."/>
            <person name="Kobatake N."/>
            <person name="Inagaki H."/>
            <person name="Ikema Y."/>
            <person name="Okamoto S."/>
            <person name="Okitani R."/>
            <person name="Kawakami T."/>
            <person name="Noguchi S."/>
            <person name="Itoh T."/>
            <person name="Shigeta K."/>
            <person name="Senba T."/>
            <person name="Matsumura K."/>
            <person name="Nakajima Y."/>
            <person name="Mizuno T."/>
            <person name="Morinaga M."/>
            <person name="Sasaki M."/>
            <person name="Togashi T."/>
            <person name="Oyama M."/>
            <person name="Hata H."/>
            <person name="Watanabe M."/>
            <person name="Komatsu T."/>
            <person name="Mizushima-Sugano J."/>
            <person name="Satoh T."/>
            <person name="Shirai Y."/>
            <person name="Takahashi Y."/>
            <person name="Nakagawa K."/>
            <person name="Okumura K."/>
            <person name="Nagase T."/>
            <person name="Nomura N."/>
            <person name="Kikuchi H."/>
            <person name="Masuho Y."/>
            <person name="Yamashita R."/>
            <person name="Nakai K."/>
            <person name="Yada T."/>
            <person name="Nakamura Y."/>
            <person name="Ohara O."/>
            <person name="Isogai T."/>
            <person name="Sugano S."/>
        </authorList>
    </citation>
    <scope>NUCLEOTIDE SEQUENCE [LARGE SCALE MRNA]</scope>
    <source>
        <tissue>Placenta</tissue>
    </source>
</reference>
<reference key="2">
    <citation type="submission" date="2004-06" db="EMBL/GenBank/DDBJ databases">
        <title>Cloning of human full open reading frames in Gateway(TM) system entry vector (pDONR201).</title>
        <authorList>
            <person name="Ebert L."/>
            <person name="Schick M."/>
            <person name="Neubert P."/>
            <person name="Schatten R."/>
            <person name="Henze S."/>
            <person name="Korn B."/>
        </authorList>
    </citation>
    <scope>NUCLEOTIDE SEQUENCE [LARGE SCALE MRNA]</scope>
</reference>
<reference key="3">
    <citation type="journal article" date="2005" name="Nature">
        <title>Generation and annotation of the DNA sequences of human chromosomes 2 and 4.</title>
        <authorList>
            <person name="Hillier L.W."/>
            <person name="Graves T.A."/>
            <person name="Fulton R.S."/>
            <person name="Fulton L.A."/>
            <person name="Pepin K.H."/>
            <person name="Minx P."/>
            <person name="Wagner-McPherson C."/>
            <person name="Layman D."/>
            <person name="Wylie K."/>
            <person name="Sekhon M."/>
            <person name="Becker M.C."/>
            <person name="Fewell G.A."/>
            <person name="Delehaunty K.D."/>
            <person name="Miner T.L."/>
            <person name="Nash W.E."/>
            <person name="Kremitzki C."/>
            <person name="Oddy L."/>
            <person name="Du H."/>
            <person name="Sun H."/>
            <person name="Bradshaw-Cordum H."/>
            <person name="Ali J."/>
            <person name="Carter J."/>
            <person name="Cordes M."/>
            <person name="Harris A."/>
            <person name="Isak A."/>
            <person name="van Brunt A."/>
            <person name="Nguyen C."/>
            <person name="Du F."/>
            <person name="Courtney L."/>
            <person name="Kalicki J."/>
            <person name="Ozersky P."/>
            <person name="Abbott S."/>
            <person name="Armstrong J."/>
            <person name="Belter E.A."/>
            <person name="Caruso L."/>
            <person name="Cedroni M."/>
            <person name="Cotton M."/>
            <person name="Davidson T."/>
            <person name="Desai A."/>
            <person name="Elliott G."/>
            <person name="Erb T."/>
            <person name="Fronick C."/>
            <person name="Gaige T."/>
            <person name="Haakenson W."/>
            <person name="Haglund K."/>
            <person name="Holmes A."/>
            <person name="Harkins R."/>
            <person name="Kim K."/>
            <person name="Kruchowski S.S."/>
            <person name="Strong C.M."/>
            <person name="Grewal N."/>
            <person name="Goyea E."/>
            <person name="Hou S."/>
            <person name="Levy A."/>
            <person name="Martinka S."/>
            <person name="Mead K."/>
            <person name="McLellan M.D."/>
            <person name="Meyer R."/>
            <person name="Randall-Maher J."/>
            <person name="Tomlinson C."/>
            <person name="Dauphin-Kohlberg S."/>
            <person name="Kozlowicz-Reilly A."/>
            <person name="Shah N."/>
            <person name="Swearengen-Shahid S."/>
            <person name="Snider J."/>
            <person name="Strong J.T."/>
            <person name="Thompson J."/>
            <person name="Yoakum M."/>
            <person name="Leonard S."/>
            <person name="Pearman C."/>
            <person name="Trani L."/>
            <person name="Radionenko M."/>
            <person name="Waligorski J.E."/>
            <person name="Wang C."/>
            <person name="Rock S.M."/>
            <person name="Tin-Wollam A.-M."/>
            <person name="Maupin R."/>
            <person name="Latreille P."/>
            <person name="Wendl M.C."/>
            <person name="Yang S.-P."/>
            <person name="Pohl C."/>
            <person name="Wallis J.W."/>
            <person name="Spieth J."/>
            <person name="Bieri T.A."/>
            <person name="Berkowicz N."/>
            <person name="Nelson J.O."/>
            <person name="Osborne J."/>
            <person name="Ding L."/>
            <person name="Meyer R."/>
            <person name="Sabo A."/>
            <person name="Shotland Y."/>
            <person name="Sinha P."/>
            <person name="Wohldmann P.E."/>
            <person name="Cook L.L."/>
            <person name="Hickenbotham M.T."/>
            <person name="Eldred J."/>
            <person name="Williams D."/>
            <person name="Jones T.A."/>
            <person name="She X."/>
            <person name="Ciccarelli F.D."/>
            <person name="Izaurralde E."/>
            <person name="Taylor J."/>
            <person name="Schmutz J."/>
            <person name="Myers R.M."/>
            <person name="Cox D.R."/>
            <person name="Huang X."/>
            <person name="McPherson J.D."/>
            <person name="Mardis E.R."/>
            <person name="Clifton S.W."/>
            <person name="Warren W.C."/>
            <person name="Chinwalla A.T."/>
            <person name="Eddy S.R."/>
            <person name="Marra M.A."/>
            <person name="Ovcharenko I."/>
            <person name="Furey T.S."/>
            <person name="Miller W."/>
            <person name="Eichler E.E."/>
            <person name="Bork P."/>
            <person name="Suyama M."/>
            <person name="Torrents D."/>
            <person name="Waterston R.H."/>
            <person name="Wilson R.K."/>
        </authorList>
    </citation>
    <scope>NUCLEOTIDE SEQUENCE [LARGE SCALE GENOMIC DNA]</scope>
</reference>
<reference key="4">
    <citation type="journal article" date="2004" name="Genome Res.">
        <title>The status, quality, and expansion of the NIH full-length cDNA project: the Mammalian Gene Collection (MGC).</title>
        <authorList>
            <consortium name="The MGC Project Team"/>
        </authorList>
    </citation>
    <scope>NUCLEOTIDE SEQUENCE [LARGE SCALE MRNA]</scope>
    <scope>VARIANT THR-83</scope>
    <source>
        <tissue>Placenta</tissue>
    </source>
</reference>
<reference key="5">
    <citation type="journal article" date="2012" name="Proc. Natl. Acad. Sci. U.S.A.">
        <title>N-terminal acetylome analyses and functional insights of the N-terminal acetyltransferase NatB.</title>
        <authorList>
            <person name="Van Damme P."/>
            <person name="Lasa M."/>
            <person name="Polevoda B."/>
            <person name="Gazquez C."/>
            <person name="Elosegui-Artola A."/>
            <person name="Kim D.S."/>
            <person name="De Juan-Pardo E."/>
            <person name="Demeyer K."/>
            <person name="Hole K."/>
            <person name="Larrea E."/>
            <person name="Timmerman E."/>
            <person name="Prieto J."/>
            <person name="Arnesen T."/>
            <person name="Sherman F."/>
            <person name="Gevaert K."/>
            <person name="Aldabe R."/>
        </authorList>
    </citation>
    <scope>IDENTIFICATION BY MASS SPECTROMETRY [LARGE SCALE ANALYSIS]</scope>
</reference>
<reference key="6">
    <citation type="journal article" date="2014" name="Mol. Cell">
        <title>Modification of ASC1 by UFM1 is crucial for ERalpha transactivation and breast cancer development.</title>
        <authorList>
            <person name="Yoo H.M."/>
            <person name="Kang S.H."/>
            <person name="Kim J.Y."/>
            <person name="Lee J.E."/>
            <person name="Seong M.W."/>
            <person name="Lee S.W."/>
            <person name="Ka S.H."/>
            <person name="Sou Y.S."/>
            <person name="Komatsu M."/>
            <person name="Tanaka K."/>
            <person name="Lee S.T."/>
            <person name="Noh D.Y."/>
            <person name="Baek S.H."/>
            <person name="Jeon Y.J."/>
            <person name="Chung C.H."/>
        </authorList>
    </citation>
    <scope>FUNCTION</scope>
    <scope>CATALYTIC ACTIVITY</scope>
    <scope>CHARACTERIZATION OF VARIANT SEMDDR SER-302</scope>
    <scope>INTERACTION WITH TRIP4</scope>
</reference>
<reference key="7">
    <citation type="journal article" date="2015" name="Cell Rep.">
        <title>An organellar nalpha-acetyltransferase, naa60, acetylates cytosolic N termini of transmembrane proteins and maintains Golgi integrity.</title>
        <authorList>
            <person name="Aksnes H."/>
            <person name="Van Damme P."/>
            <person name="Goris M."/>
            <person name="Starheim K.K."/>
            <person name="Marie M."/>
            <person name="Stoeve S.I."/>
            <person name="Hoel C."/>
            <person name="Kalvik T.V."/>
            <person name="Hole K."/>
            <person name="Glomnes N."/>
            <person name="Furnes C."/>
            <person name="Ljostveit S."/>
            <person name="Ziegler M."/>
            <person name="Niere M."/>
            <person name="Gevaert K."/>
            <person name="Arnesen T."/>
        </authorList>
    </citation>
    <scope>ACETYLATION AT MET-1</scope>
</reference>
<reference key="8">
    <citation type="journal article" date="2015" name="S. Afr. Med. J.">
        <title>Identification of a mutation in the ubiquitin-fold modifier 1-specific peptidase 2 gene, UFSP2, in an extended South African family with Beukes hip dysplasia.</title>
        <authorList>
            <person name="Watson C.M."/>
            <person name="Crinnion L.A."/>
            <person name="Gleghorn L."/>
            <person name="Newman W.G."/>
            <person name="Ramesar R."/>
            <person name="Beighton P."/>
            <person name="Wallis G.A."/>
        </authorList>
    </citation>
    <scope>INVOLVEMENT IN HDB</scope>
    <scope>VARIANT HDB HIS-290</scope>
    <scope>CHARACTERIZATION OF VARIANT HDB HIS-290</scope>
</reference>
<reference key="9">
    <citation type="journal article" date="2016" name="Elife">
        <title>Functional CRISPR screening identifies the ufmylation pathway as a regulator of SQSTM1/p62.</title>
        <authorList>
            <person name="DeJesus R."/>
            <person name="Moretti F."/>
            <person name="McAllister G."/>
            <person name="Wang Z."/>
            <person name="Bergman P."/>
            <person name="Liu S."/>
            <person name="Frias E."/>
            <person name="Alford J."/>
            <person name="Reece-Hoyes J.S."/>
            <person name="Lindeman A."/>
            <person name="Kelliher J."/>
            <person name="Russ C."/>
            <person name="Knehr J."/>
            <person name="Carbone W."/>
            <person name="Beibel M."/>
            <person name="Roma G."/>
            <person name="Ng A."/>
            <person name="Tallarico J.A."/>
            <person name="Porter J.A."/>
            <person name="Xavier R.J."/>
            <person name="Mickanin C."/>
            <person name="Murphy L.O."/>
            <person name="Hoffman G.R."/>
            <person name="Nyfeler B."/>
        </authorList>
    </citation>
    <scope>FUNCTION</scope>
</reference>
<reference key="10">
    <citation type="journal article" date="2017" name="FEBS Lett.">
        <title>A novel approach to assess the ubiquitin-fold modifier 1-system in cells.</title>
        <authorList>
            <person name="Ishimura R."/>
            <person name="Obata M."/>
            <person name="Kageyama S."/>
            <person name="Daniel J."/>
            <person name="Tanaka K."/>
            <person name="Komatsu M."/>
        </authorList>
    </citation>
    <scope>FUNCTION</scope>
</reference>
<reference key="11">
    <citation type="journal article" date="2019" name="Nucleic Acids Res.">
        <title>MRE11 UFMylation promotes ATM activation.</title>
        <authorList>
            <person name="Wang Z."/>
            <person name="Gong Y."/>
            <person name="Peng B."/>
            <person name="Shi R."/>
            <person name="Fan D."/>
            <person name="Zhao H."/>
            <person name="Zhu M."/>
            <person name="Zhang H."/>
            <person name="Lou Z."/>
            <person name="Zhou J."/>
            <person name="Zhu W.G."/>
            <person name="Cong Y.S."/>
            <person name="Xu X."/>
        </authorList>
    </citation>
    <scope>FUNCTION</scope>
    <scope>CHARACTERIZATION OF VARIANT SEMDDR SER-302</scope>
</reference>
<reference key="12">
    <citation type="journal article" date="2020" name="Cell">
        <title>A genome-wide ER-phagy screen highlights key roles of mitochondrial metabolism and ER-Resident UFMylation.</title>
        <authorList>
            <person name="Liang J.R."/>
            <person name="Lingeman E."/>
            <person name="Luong T."/>
            <person name="Ahmed S."/>
            <person name="Muhar M."/>
            <person name="Nguyen T."/>
            <person name="Olzmann J.A."/>
            <person name="Corn J.E."/>
        </authorList>
    </citation>
    <scope>FUNCTION</scope>
</reference>
<reference key="13">
    <citation type="journal article" date="2020" name="Cell Res.">
        <title>UFMylation of RPL26 links translocation-associated quality control to endoplasmic reticulum protein homeostasis.</title>
        <authorList>
            <person name="Wang L."/>
            <person name="Xu Y."/>
            <person name="Rogers H."/>
            <person name="Saidi L."/>
            <person name="Noguchi C.T."/>
            <person name="Li H."/>
            <person name="Yewdell J.W."/>
            <person name="Guydosh N.R."/>
            <person name="Ye Y."/>
        </authorList>
    </citation>
    <scope>FUNCTION</scope>
</reference>
<reference key="14">
    <citation type="journal article" date="2022" name="Cell Rep.">
        <title>Human UFSP1 is an active protease that regulates UFM1 maturation and UFMylation.</title>
        <authorList>
            <person name="Millrine D."/>
            <person name="Cummings T."/>
            <person name="Matthews S.P."/>
            <person name="Peter J.J."/>
            <person name="Magnussen H.M."/>
            <person name="Lange S.M."/>
            <person name="Macartney T."/>
            <person name="Lamoliatte F."/>
            <person name="Knebel A."/>
            <person name="Kulathu Y."/>
        </authorList>
    </citation>
    <scope>FUNCTION</scope>
    <scope>SUBCELLULAR LOCATION</scope>
</reference>
<reference key="15">
    <citation type="journal article" date="2022" name="Nat. Commun.">
        <title>The UFM1 system regulates ER-phagy through the ufmylation of CYB5R3.</title>
        <authorList>
            <person name="Ishimura R."/>
            <person name="El-Gowily A.H."/>
            <person name="Noshiro D."/>
            <person name="Komatsu-Hirota S."/>
            <person name="Ono Y."/>
            <person name="Shindo M."/>
            <person name="Hatta T."/>
            <person name="Abe M."/>
            <person name="Uemura T."/>
            <person name="Lee-Okada H.C."/>
            <person name="Mohamed T.M."/>
            <person name="Yokomizo T."/>
            <person name="Ueno T."/>
            <person name="Sakimura K."/>
            <person name="Natsume T."/>
            <person name="Sorimachi H."/>
            <person name="Inada T."/>
            <person name="Waguri S."/>
            <person name="Noda N.N."/>
            <person name="Komatsu M."/>
        </authorList>
    </citation>
    <scope>FUNCTION</scope>
    <scope>CATALYTIC ACTIVITY</scope>
    <scope>ACTIVE SITE</scope>
    <scope>MUTAGENESIS OF CYS-302</scope>
</reference>
<reference key="16">
    <citation type="journal article" date="2022" name="Proc. Natl. Acad. Sci. U.S.A.">
        <title>Signaling from the RNA sensor RIG-I is regulated by ufmylation.</title>
        <authorList>
            <person name="Snider D.L."/>
            <person name="Park M."/>
            <person name="Murphy K.A."/>
            <person name="Beachboard D.C."/>
            <person name="Horner S.M."/>
        </authorList>
    </citation>
    <scope>FUNCTION</scope>
</reference>
<reference key="17">
    <citation type="journal article" date="2023" name="FASEB J.">
        <title>UFMylation of HRD1 regulates endoplasmic reticulum homeostasis.</title>
        <authorList>
            <person name="Luo H."/>
            <person name="Jiao Q.B."/>
            <person name="Shen C.B."/>
            <person name="Gong W.Y."/>
            <person name="Yuan J.H."/>
            <person name="Liu Y.Y."/>
            <person name="Chen Z."/>
            <person name="Liu J."/>
            <person name="Xu X.L."/>
            <person name="Cong Y.S."/>
            <person name="Zhang X.W."/>
        </authorList>
    </citation>
    <scope>FUNCTION</scope>
    <scope>CATALYTIC ACTIVITY</scope>
</reference>
<reference key="18">
    <citation type="journal article" date="2023" name="Proc. Natl. Acad. Sci. U.S.A.">
        <title>Dysregulation of PD-L1 by UFMylation imparts tumor immune evasion and identified as a potential therapeutic target.</title>
        <authorList>
            <person name="Zhou J."/>
            <person name="Ma X."/>
            <person name="He X."/>
            <person name="Chen B."/>
            <person name="Yuan J."/>
            <person name="Jin Z."/>
            <person name="Li L."/>
            <person name="Wang Z."/>
            <person name="Xiao Q."/>
            <person name="Cai Y."/>
            <person name="Zou Y."/>
            <person name="Cong Y.S."/>
        </authorList>
    </citation>
    <scope>FUNCTION</scope>
    <scope>CATALYTIC ACTIVITY</scope>
</reference>
<reference key="19">
    <citation type="journal article" date="2024" name="Nature">
        <title>UFM1 E3 ligase promotes recycling of 60S ribosomal subunits from the ER.</title>
        <authorList>
            <person name="DaRosa P.A."/>
            <person name="Penchev I."/>
            <person name="Gumbin S.C."/>
            <person name="Scavone F."/>
            <person name="Wachalska M."/>
            <person name="Paulo J.A."/>
            <person name="Ordureau A."/>
            <person name="Peter J.J."/>
            <person name="Kulathu Y."/>
            <person name="Harper J.W."/>
            <person name="Becker T."/>
            <person name="Beckmann R."/>
            <person name="Kopito R.R."/>
        </authorList>
    </citation>
    <scope>FUNCTION</scope>
    <scope>CATALYTIC ACTIVITY</scope>
</reference>
<reference key="20">
    <citation type="journal article" date="2021" name="Genet. Med.">
        <title>A pathogenic UFSP2 variant in an autosomal recessive form of pediatric neurodevelopmental anomalies and epilepsy.</title>
        <authorList>
            <person name="Ni M."/>
            <person name="Afroze B."/>
            <person name="Xing C."/>
            <person name="Pan C."/>
            <person name="Shao Y."/>
            <person name="Cai L."/>
            <person name="Cantarel B.L."/>
            <person name="Pei J."/>
            <person name="Grishin N.V."/>
            <person name="Hewson S."/>
            <person name="Knight D."/>
            <person name="Mahida S."/>
            <person name="Michel D."/>
            <person name="Tarnopolsky M."/>
            <person name="Poduri A."/>
            <person name="Rotenberg A."/>
            <person name="Sondheimer N."/>
            <person name="DeBerardinis R.J."/>
        </authorList>
    </citation>
    <scope>INVOLVEMENT IN DEE106</scope>
    <scope>VARIANT DEE106 GLU-115</scope>
    <scope>CHARACTERIZATION OF VARIANT DEE106 GLU-115</scope>
    <scope>FUNCTION</scope>
    <scope>TISSUE SPECIFICITY</scope>
</reference>
<reference key="21">
    <citation type="journal article" date="2018" name="Clin. Genet.">
        <title>Novel spondyloepimetaphyseal dysplasia due to UFSP2 gene mutation.</title>
        <authorList>
            <person name="Di Rocco M."/>
            <person name="Rusmini M."/>
            <person name="Caroli F."/>
            <person name="Madeo A."/>
            <person name="Bertamino M."/>
            <person name="Marre-Brunenghi G."/>
            <person name="Ceccherini I."/>
        </authorList>
    </citation>
    <scope>VARIANT SEMDDR ALA-426</scope>
</reference>
<reference key="22">
    <citation type="journal article" date="2020" name="Eur. J. Med. Genet.">
        <title>UFSP2-related spondyloepimetaphyseal dysplasia: A confirmatory report.</title>
        <authorList>
            <person name="Zhang G."/>
            <person name="Tang S."/>
            <person name="Wang H."/>
            <person name="Pan H."/>
            <person name="Zhang W."/>
            <person name="Huang Y."/>
            <person name="Kong J."/>
            <person name="Wang Y."/>
            <person name="Gu J."/>
            <person name="Wang Y."/>
        </authorList>
    </citation>
    <scope>VARIANT SEMDDR ARG-428</scope>
</reference>
<reference key="23">
    <citation type="journal article" date="2021" name="Eur. J. Med. Genet.">
        <title>Corrigendum to UFSP2-related spondyloepimetaphyseal dysplasia: A confirmatory report [European Journal of Medical Genetics, (2020) Nov; 63(11): 104021].</title>
        <authorList>
            <person name="Zhang G."/>
            <person name="Tang S."/>
            <person name="Wang H."/>
            <person name="Pan H."/>
            <person name="Zhang W."/>
            <person name="Huang Y."/>
            <person name="Kong J."/>
            <person name="Wang Y."/>
            <person name="Gu J."/>
            <person name="Wang Y."/>
        </authorList>
    </citation>
    <scope>ERRATUM OF PUBMED:32755715</scope>
</reference>
<reference key="24">
    <citation type="journal article" date="2023" name="Bone Rep.">
        <title>Variant of the catalytic cysteine of UFSP2 leads to spondyloepimetaphyseal dysplasia type Di Rocco.</title>
        <authorList>
            <person name="Mattern L."/>
            <person name="Begemann M."/>
            <person name="Delbrueck H."/>
            <person name="Holschbach P."/>
            <person name="Schroeder S."/>
            <person name="Schacht S.M."/>
            <person name="Kurth I."/>
            <person name="Elbracht M."/>
        </authorList>
    </citation>
    <scope>VARIANT SEMDDR SER-302</scope>
</reference>
<feature type="chain" id="PRO_0000280362" description="Ufm1-specific protease 2">
    <location>
        <begin position="1"/>
        <end position="469"/>
    </location>
</feature>
<feature type="active site" evidence="23 24">
    <location>
        <position position="302"/>
    </location>
</feature>
<feature type="active site" evidence="1">
    <location>
        <position position="426"/>
    </location>
</feature>
<feature type="active site" evidence="1">
    <location>
        <position position="428"/>
    </location>
</feature>
<feature type="modified residue" description="N-acetylmethionine" evidence="4">
    <location>
        <position position="1"/>
    </location>
</feature>
<feature type="sequence variant" id="VAR_031126" description="In dbSNP:rs17850669." evidence="2">
    <original>N</original>
    <variation>T</variation>
    <location>
        <position position="83"/>
    </location>
</feature>
<feature type="sequence variant" id="VAR_087725" description="In DEE106; decreased function in deUFMylation; reduced UFSP2 abundance and increased abundance of UFMylated targets in homozygous patient-derived fibroblasts; dbSNP:rs142500730." evidence="13">
    <original>V</original>
    <variation>E</variation>
    <location>
        <position position="115"/>
    </location>
</feature>
<feature type="sequence variant" id="VAR_074673" description="In HDB; loss of protease activity toward the C-terminal of UFM1; dbSNP:rs796052130." evidence="5">
    <original>Y</original>
    <variation>H</variation>
    <location>
        <position position="290"/>
    </location>
</feature>
<feature type="sequence variant" id="VAR_089241" description="In SEMDDR; catalytically inactive; loss of protease activity; dbSNP:rs2153279702." evidence="3 9 18">
    <original>C</original>
    <variation>S</variation>
    <location>
        <position position="302"/>
    </location>
</feature>
<feature type="sequence variant" id="VAR_079708" description="In SEMDDR; dbSNP:rs1554022725." evidence="8">
    <original>D</original>
    <variation>A</variation>
    <location>
        <position position="426"/>
    </location>
</feature>
<feature type="sequence variant" id="VAR_087726" description="In SEMDDR; dbSNP:rs2095515802." evidence="12">
    <original>H</original>
    <variation>R</variation>
    <location>
        <position position="428"/>
    </location>
</feature>
<feature type="mutagenesis site" description="Catalytically inactive; loss of protease activity." evidence="16">
    <original>C</original>
    <variation>A</variation>
    <location>
        <position position="302"/>
    </location>
</feature>
<feature type="sequence conflict" description="In Ref. 1; BAA92064." evidence="22" ref="1">
    <original>I</original>
    <variation>V</variation>
    <location>
        <position position="88"/>
    </location>
</feature>
<feature type="sequence conflict" description="In Ref. 1; BAA92064." evidence="22" ref="1">
    <original>D</original>
    <variation>G</variation>
    <location>
        <position position="232"/>
    </location>
</feature>
<organism>
    <name type="scientific">Homo sapiens</name>
    <name type="common">Human</name>
    <dbReference type="NCBI Taxonomy" id="9606"/>
    <lineage>
        <taxon>Eukaryota</taxon>
        <taxon>Metazoa</taxon>
        <taxon>Chordata</taxon>
        <taxon>Craniata</taxon>
        <taxon>Vertebrata</taxon>
        <taxon>Euteleostomi</taxon>
        <taxon>Mammalia</taxon>
        <taxon>Eutheria</taxon>
        <taxon>Euarchontoglires</taxon>
        <taxon>Primates</taxon>
        <taxon>Haplorrhini</taxon>
        <taxon>Catarrhini</taxon>
        <taxon>Hominidae</taxon>
        <taxon>Homo</taxon>
    </lineage>
</organism>
<name>UFSP2_HUMAN</name>
<proteinExistence type="evidence at protein level"/>
<sequence length="469" mass="53261">MVISESMDILFRIRGGLDLAFQLATPNEIFLKKALKHVLSDLSTKLSSNALVFRICHSSVYIWPSSDINTIPGELTDASACKNILRFIQFEPEEDIKRKFMRKKDKKLSDMHQIVNIDLMLEMSTSLAAVTPIIERESGGHHYVNMTLPVDAVISVAPEETWGKVRKLLVDAIHNQLTDMEKCILKYMKGTSIVVPEPLHFLLPGKKNLVTISYPSGIPDGQLQAYRKELHDLFNLPHDRPYFKRSNAYHFPDEPYKDGYIRNPHTYLNPPNMETGMIYVVQGIYGYHHYMQDRIDDNGWGCAYRSLQTICSWFKHQGYTERSIPTHREIQQALVDAGDKPATFVGSRQWIGSIEVQLVLNQLIGITSKILFVSQGSEIASQGRELANHFQSEGTPVMIGGGVLAHTILGVAWNEITGQIKFLILDPHYTGAEDLQVILEKGWCGWKGPDFWNKDAYYNLCLPQRPNMI</sequence>